<reference key="1">
    <citation type="journal article" date="1998" name="DNA Res.">
        <title>Complete sequence and gene organization of the genome of a hyper-thermophilic archaebacterium, Pyrococcus horikoshii OT3.</title>
        <authorList>
            <person name="Kawarabayasi Y."/>
            <person name="Sawada M."/>
            <person name="Horikawa H."/>
            <person name="Haikawa Y."/>
            <person name="Hino Y."/>
            <person name="Yamamoto S."/>
            <person name="Sekine M."/>
            <person name="Baba S."/>
            <person name="Kosugi H."/>
            <person name="Hosoyama A."/>
            <person name="Nagai Y."/>
            <person name="Sakai M."/>
            <person name="Ogura K."/>
            <person name="Otsuka R."/>
            <person name="Nakazawa H."/>
            <person name="Takamiya M."/>
            <person name="Ohfuku Y."/>
            <person name="Funahashi T."/>
            <person name="Tanaka T."/>
            <person name="Kudoh Y."/>
            <person name="Yamazaki J."/>
            <person name="Kushida N."/>
            <person name="Oguchi A."/>
            <person name="Aoki K."/>
            <person name="Yoshizawa T."/>
            <person name="Nakamura Y."/>
            <person name="Robb F.T."/>
            <person name="Horikoshi K."/>
            <person name="Masuchi Y."/>
            <person name="Shizuya H."/>
            <person name="Kikuchi H."/>
        </authorList>
    </citation>
    <scope>NUCLEOTIDE SEQUENCE [LARGE SCALE GENOMIC DNA]</scope>
    <source>
        <strain>ATCC 700860 / DSM 12428 / JCM 9974 / NBRC 100139 / OT-3</strain>
    </source>
</reference>
<feature type="chain" id="PRO_0000158057" description="Protein-glutamate methylesterase/protein-glutamine glutaminase">
    <location>
        <begin position="1"/>
        <end position="368"/>
    </location>
</feature>
<feature type="domain" description="Response regulatory" evidence="1">
    <location>
        <begin position="9"/>
        <end position="126"/>
    </location>
</feature>
<feature type="domain" description="CheB-type methylesterase" evidence="1">
    <location>
        <begin position="161"/>
        <end position="354"/>
    </location>
</feature>
<feature type="active site" evidence="1">
    <location>
        <position position="173"/>
    </location>
</feature>
<feature type="active site" evidence="1">
    <location>
        <position position="200"/>
    </location>
</feature>
<feature type="active site" evidence="1">
    <location>
        <position position="296"/>
    </location>
</feature>
<feature type="modified residue" description="4-aspartylphosphate" evidence="1">
    <location>
        <position position="60"/>
    </location>
</feature>
<name>CHEB_PYRHO</name>
<gene>
    <name evidence="1" type="primary">cheB</name>
    <name type="ordered locus">PH0483</name>
</gene>
<dbReference type="EC" id="3.1.1.61" evidence="1"/>
<dbReference type="EC" id="3.5.1.44" evidence="1"/>
<dbReference type="EMBL" id="BA000001">
    <property type="protein sequence ID" value="BAA29571.1"/>
    <property type="molecule type" value="Genomic_DNA"/>
</dbReference>
<dbReference type="PIR" id="F71160">
    <property type="entry name" value="F71160"/>
</dbReference>
<dbReference type="RefSeq" id="WP_010884593.1">
    <property type="nucleotide sequence ID" value="NC_000961.1"/>
</dbReference>
<dbReference type="SMR" id="O58192"/>
<dbReference type="STRING" id="70601.gene:9377417"/>
<dbReference type="EnsemblBacteria" id="BAA29571">
    <property type="protein sequence ID" value="BAA29571"/>
    <property type="gene ID" value="BAA29571"/>
</dbReference>
<dbReference type="GeneID" id="1444380"/>
<dbReference type="KEGG" id="pho:PH0483"/>
<dbReference type="eggNOG" id="arCOG02382">
    <property type="taxonomic scope" value="Archaea"/>
</dbReference>
<dbReference type="OrthoDB" id="2857at2157"/>
<dbReference type="Proteomes" id="UP000000752">
    <property type="component" value="Chromosome"/>
</dbReference>
<dbReference type="GO" id="GO:0005737">
    <property type="term" value="C:cytoplasm"/>
    <property type="evidence" value="ECO:0007669"/>
    <property type="project" value="UniProtKB-SubCell"/>
</dbReference>
<dbReference type="GO" id="GO:0000156">
    <property type="term" value="F:phosphorelay response regulator activity"/>
    <property type="evidence" value="ECO:0007669"/>
    <property type="project" value="InterPro"/>
</dbReference>
<dbReference type="GO" id="GO:0008984">
    <property type="term" value="F:protein-glutamate methylesterase activity"/>
    <property type="evidence" value="ECO:0007669"/>
    <property type="project" value="UniProtKB-UniRule"/>
</dbReference>
<dbReference type="GO" id="GO:0050568">
    <property type="term" value="F:protein-glutamine glutaminase activity"/>
    <property type="evidence" value="ECO:0007669"/>
    <property type="project" value="UniProtKB-UniRule"/>
</dbReference>
<dbReference type="GO" id="GO:0006935">
    <property type="term" value="P:chemotaxis"/>
    <property type="evidence" value="ECO:0007669"/>
    <property type="project" value="UniProtKB-UniRule"/>
</dbReference>
<dbReference type="CDD" id="cd16432">
    <property type="entry name" value="CheB_Rec"/>
    <property type="match status" value="1"/>
</dbReference>
<dbReference type="CDD" id="cd17541">
    <property type="entry name" value="REC_CheB-like"/>
    <property type="match status" value="1"/>
</dbReference>
<dbReference type="Gene3D" id="3.40.50.2300">
    <property type="match status" value="1"/>
</dbReference>
<dbReference type="Gene3D" id="3.40.50.180">
    <property type="entry name" value="Methylesterase CheB, C-terminal domain"/>
    <property type="match status" value="1"/>
</dbReference>
<dbReference type="HAMAP" id="MF_00099">
    <property type="entry name" value="CheB_chemtxs"/>
    <property type="match status" value="1"/>
</dbReference>
<dbReference type="InterPro" id="IPR008248">
    <property type="entry name" value="CheB-like"/>
</dbReference>
<dbReference type="InterPro" id="IPR035909">
    <property type="entry name" value="CheB_C"/>
</dbReference>
<dbReference type="InterPro" id="IPR011006">
    <property type="entry name" value="CheY-like_superfamily"/>
</dbReference>
<dbReference type="InterPro" id="IPR000673">
    <property type="entry name" value="Sig_transdc_resp-reg_Me-estase"/>
</dbReference>
<dbReference type="InterPro" id="IPR001789">
    <property type="entry name" value="Sig_transdc_resp-reg_receiver"/>
</dbReference>
<dbReference type="NCBIfam" id="NF001965">
    <property type="entry name" value="PRK00742.1"/>
    <property type="match status" value="1"/>
</dbReference>
<dbReference type="NCBIfam" id="NF009206">
    <property type="entry name" value="PRK12555.1"/>
    <property type="match status" value="1"/>
</dbReference>
<dbReference type="PANTHER" id="PTHR42872">
    <property type="entry name" value="PROTEIN-GLUTAMATE METHYLESTERASE/PROTEIN-GLUTAMINE GLUTAMINASE"/>
    <property type="match status" value="1"/>
</dbReference>
<dbReference type="PANTHER" id="PTHR42872:SF6">
    <property type="entry name" value="PROTEIN-GLUTAMATE METHYLESTERASE_PROTEIN-GLUTAMINE GLUTAMINASE"/>
    <property type="match status" value="1"/>
</dbReference>
<dbReference type="Pfam" id="PF01339">
    <property type="entry name" value="CheB_methylest"/>
    <property type="match status" value="1"/>
</dbReference>
<dbReference type="Pfam" id="PF00072">
    <property type="entry name" value="Response_reg"/>
    <property type="match status" value="1"/>
</dbReference>
<dbReference type="PIRSF" id="PIRSF000876">
    <property type="entry name" value="RR_chemtxs_CheB"/>
    <property type="match status" value="1"/>
</dbReference>
<dbReference type="SMART" id="SM00448">
    <property type="entry name" value="REC"/>
    <property type="match status" value="1"/>
</dbReference>
<dbReference type="SUPFAM" id="SSF52172">
    <property type="entry name" value="CheY-like"/>
    <property type="match status" value="1"/>
</dbReference>
<dbReference type="SUPFAM" id="SSF52738">
    <property type="entry name" value="Methylesterase CheB, C-terminal domain"/>
    <property type="match status" value="1"/>
</dbReference>
<dbReference type="PROSITE" id="PS50122">
    <property type="entry name" value="CHEB"/>
    <property type="match status" value="1"/>
</dbReference>
<dbReference type="PROSITE" id="PS50110">
    <property type="entry name" value="RESPONSE_REGULATORY"/>
    <property type="match status" value="1"/>
</dbReference>
<keyword id="KW-0145">Chemotaxis</keyword>
<keyword id="KW-0963">Cytoplasm</keyword>
<keyword id="KW-0378">Hydrolase</keyword>
<keyword id="KW-0597">Phosphoprotein</keyword>
<organism>
    <name type="scientific">Pyrococcus horikoshii (strain ATCC 700860 / DSM 12428 / JCM 9974 / NBRC 100139 / OT-3)</name>
    <dbReference type="NCBI Taxonomy" id="70601"/>
    <lineage>
        <taxon>Archaea</taxon>
        <taxon>Methanobacteriati</taxon>
        <taxon>Methanobacteriota</taxon>
        <taxon>Thermococci</taxon>
        <taxon>Thermococcales</taxon>
        <taxon>Thermococcaceae</taxon>
        <taxon>Pyrococcus</taxon>
    </lineage>
</organism>
<protein>
    <recommendedName>
        <fullName evidence="1">Protein-glutamate methylesterase/protein-glutamine glutaminase</fullName>
        <ecNumber evidence="1">3.1.1.61</ecNumber>
        <ecNumber evidence="1">3.5.1.44</ecNumber>
    </recommendedName>
</protein>
<evidence type="ECO:0000255" key="1">
    <source>
        <dbReference type="HAMAP-Rule" id="MF_00099"/>
    </source>
</evidence>
<proteinExistence type="inferred from homology"/>
<comment type="function">
    <text evidence="1">Involved in chemotaxis. Part of a chemotaxis signal transduction system that modulates chemotaxis in response to various stimuli. Catalyzes the demethylation of specific methylglutamate residues introduced into the chemoreceptors (methyl-accepting chemotaxis proteins or MCP) by CheR. Also mediates the irreversible deamidation of specific glutamine residues to glutamic acid.</text>
</comment>
<comment type="catalytic activity">
    <reaction evidence="1">
        <text>[protein]-L-glutamate 5-O-methyl ester + H2O = L-glutamyl-[protein] + methanol + H(+)</text>
        <dbReference type="Rhea" id="RHEA:23236"/>
        <dbReference type="Rhea" id="RHEA-COMP:10208"/>
        <dbReference type="Rhea" id="RHEA-COMP:10311"/>
        <dbReference type="ChEBI" id="CHEBI:15377"/>
        <dbReference type="ChEBI" id="CHEBI:15378"/>
        <dbReference type="ChEBI" id="CHEBI:17790"/>
        <dbReference type="ChEBI" id="CHEBI:29973"/>
        <dbReference type="ChEBI" id="CHEBI:82795"/>
        <dbReference type="EC" id="3.1.1.61"/>
    </reaction>
</comment>
<comment type="catalytic activity">
    <reaction evidence="1">
        <text>L-glutaminyl-[protein] + H2O = L-glutamyl-[protein] + NH4(+)</text>
        <dbReference type="Rhea" id="RHEA:16441"/>
        <dbReference type="Rhea" id="RHEA-COMP:10207"/>
        <dbReference type="Rhea" id="RHEA-COMP:10208"/>
        <dbReference type="ChEBI" id="CHEBI:15377"/>
        <dbReference type="ChEBI" id="CHEBI:28938"/>
        <dbReference type="ChEBI" id="CHEBI:29973"/>
        <dbReference type="ChEBI" id="CHEBI:30011"/>
        <dbReference type="EC" id="3.5.1.44"/>
    </reaction>
</comment>
<comment type="subcellular location">
    <subcellularLocation>
        <location evidence="1">Cytoplasm</location>
    </subcellularLocation>
</comment>
<comment type="domain">
    <text evidence="1">Contains a C-terminal catalytic domain, and an N-terminal region which modulates catalytic activity.</text>
</comment>
<comment type="PTM">
    <text evidence="1">Phosphorylated by CheA. Phosphorylation of the N-terminal regulatory domain activates the methylesterase activity.</text>
</comment>
<comment type="similarity">
    <text evidence="1">Belongs to the CheB family.</text>
</comment>
<accession>O58192</accession>
<sequence length="368" mass="40214">MPLMGRKIKVLVVDDSAFMRKVLKDIINSDPELEVCGEARDGIEAIEMVQKCRPDVVTLDVEMPRMNGLDALRVIMKRYPVPVIMISALTQEGADATIKALEYGAIDFIPKPSSSISINMKELKDEIIAKIKEAAKVPRRFLELRRIRLLRVQKAKKVKPSVPARIAVAIAASTGGPQSLLKIFPKFPEDLKAGILLVQHMPPGFTRSFAKRLDSVSKIDVKEAEEGDVVEEGKAYVAPGDYHMEVTLRAGKPVITLNKKPKIHGVRPAADPMMITAAQVFGRRTVGVVMTGMGRDGAQGIVEIKKKGGITIAQDEKTSIIFGMPKAAIETGMVDYVVPLEKIPETVVKAVEIIRGGGNLGRHVTISR</sequence>